<accession>P11152</accession>
<accession>Q05956</accession>
<accession>Q542L4</accession>
<accession>Q9D3M9</accession>
<accession>Q9DCM8</accession>
<name>LIPL_MOUSE</name>
<reference key="1">
    <citation type="journal article" date="1989" name="J. Lipid Res.">
        <title>Lipoprotein lipase and hepatic lipase mRNA tissue specific expression, developmental regulation, and evolution.</title>
        <authorList>
            <person name="Semenkovich C.F."/>
            <person name="Chen S.H."/>
            <person name="Wims M."/>
            <person name="Luo C.C."/>
            <person name="Li W.H."/>
            <person name="Chan L."/>
        </authorList>
    </citation>
    <scope>NUCLEOTIDE SEQUENCE [MRNA]</scope>
    <scope>TISSUE SPECIFICITY</scope>
    <scope>DEVELOPMENTAL STAGE</scope>
    <source>
        <tissue>Macrophage</tissue>
    </source>
</reference>
<reference key="2">
    <citation type="journal article" date="1991" name="Genomics">
        <title>The structure of the mouse lipoprotein lipase gene: a B1 repetitive element is inserted into the 3' untranslated region of the mRNA.</title>
        <authorList>
            <person name="Zechner R."/>
            <person name="Newman T.C."/>
            <person name="Steiner E."/>
            <person name="Breslow J.L."/>
        </authorList>
    </citation>
    <scope>NUCLEOTIDE SEQUENCE [GENOMIC DNA]</scope>
</reference>
<reference key="3">
    <citation type="journal article" date="2005" name="Science">
        <title>The transcriptional landscape of the mammalian genome.</title>
        <authorList>
            <person name="Carninci P."/>
            <person name="Kasukawa T."/>
            <person name="Katayama S."/>
            <person name="Gough J."/>
            <person name="Frith M.C."/>
            <person name="Maeda N."/>
            <person name="Oyama R."/>
            <person name="Ravasi T."/>
            <person name="Lenhard B."/>
            <person name="Wells C."/>
            <person name="Kodzius R."/>
            <person name="Shimokawa K."/>
            <person name="Bajic V.B."/>
            <person name="Brenner S.E."/>
            <person name="Batalov S."/>
            <person name="Forrest A.R."/>
            <person name="Zavolan M."/>
            <person name="Davis M.J."/>
            <person name="Wilming L.G."/>
            <person name="Aidinis V."/>
            <person name="Allen J.E."/>
            <person name="Ambesi-Impiombato A."/>
            <person name="Apweiler R."/>
            <person name="Aturaliya R.N."/>
            <person name="Bailey T.L."/>
            <person name="Bansal M."/>
            <person name="Baxter L."/>
            <person name="Beisel K.W."/>
            <person name="Bersano T."/>
            <person name="Bono H."/>
            <person name="Chalk A.M."/>
            <person name="Chiu K.P."/>
            <person name="Choudhary V."/>
            <person name="Christoffels A."/>
            <person name="Clutterbuck D.R."/>
            <person name="Crowe M.L."/>
            <person name="Dalla E."/>
            <person name="Dalrymple B.P."/>
            <person name="de Bono B."/>
            <person name="Della Gatta G."/>
            <person name="di Bernardo D."/>
            <person name="Down T."/>
            <person name="Engstrom P."/>
            <person name="Fagiolini M."/>
            <person name="Faulkner G."/>
            <person name="Fletcher C.F."/>
            <person name="Fukushima T."/>
            <person name="Furuno M."/>
            <person name="Futaki S."/>
            <person name="Gariboldi M."/>
            <person name="Georgii-Hemming P."/>
            <person name="Gingeras T.R."/>
            <person name="Gojobori T."/>
            <person name="Green R.E."/>
            <person name="Gustincich S."/>
            <person name="Harbers M."/>
            <person name="Hayashi Y."/>
            <person name="Hensch T.K."/>
            <person name="Hirokawa N."/>
            <person name="Hill D."/>
            <person name="Huminiecki L."/>
            <person name="Iacono M."/>
            <person name="Ikeo K."/>
            <person name="Iwama A."/>
            <person name="Ishikawa T."/>
            <person name="Jakt M."/>
            <person name="Kanapin A."/>
            <person name="Katoh M."/>
            <person name="Kawasawa Y."/>
            <person name="Kelso J."/>
            <person name="Kitamura H."/>
            <person name="Kitano H."/>
            <person name="Kollias G."/>
            <person name="Krishnan S.P."/>
            <person name="Kruger A."/>
            <person name="Kummerfeld S.K."/>
            <person name="Kurochkin I.V."/>
            <person name="Lareau L.F."/>
            <person name="Lazarevic D."/>
            <person name="Lipovich L."/>
            <person name="Liu J."/>
            <person name="Liuni S."/>
            <person name="McWilliam S."/>
            <person name="Madan Babu M."/>
            <person name="Madera M."/>
            <person name="Marchionni L."/>
            <person name="Matsuda H."/>
            <person name="Matsuzawa S."/>
            <person name="Miki H."/>
            <person name="Mignone F."/>
            <person name="Miyake S."/>
            <person name="Morris K."/>
            <person name="Mottagui-Tabar S."/>
            <person name="Mulder N."/>
            <person name="Nakano N."/>
            <person name="Nakauchi H."/>
            <person name="Ng P."/>
            <person name="Nilsson R."/>
            <person name="Nishiguchi S."/>
            <person name="Nishikawa S."/>
            <person name="Nori F."/>
            <person name="Ohara O."/>
            <person name="Okazaki Y."/>
            <person name="Orlando V."/>
            <person name="Pang K.C."/>
            <person name="Pavan W.J."/>
            <person name="Pavesi G."/>
            <person name="Pesole G."/>
            <person name="Petrovsky N."/>
            <person name="Piazza S."/>
            <person name="Reed J."/>
            <person name="Reid J.F."/>
            <person name="Ring B.Z."/>
            <person name="Ringwald M."/>
            <person name="Rost B."/>
            <person name="Ruan Y."/>
            <person name="Salzberg S.L."/>
            <person name="Sandelin A."/>
            <person name="Schneider C."/>
            <person name="Schoenbach C."/>
            <person name="Sekiguchi K."/>
            <person name="Semple C.A."/>
            <person name="Seno S."/>
            <person name="Sessa L."/>
            <person name="Sheng Y."/>
            <person name="Shibata Y."/>
            <person name="Shimada H."/>
            <person name="Shimada K."/>
            <person name="Silva D."/>
            <person name="Sinclair B."/>
            <person name="Sperling S."/>
            <person name="Stupka E."/>
            <person name="Sugiura K."/>
            <person name="Sultana R."/>
            <person name="Takenaka Y."/>
            <person name="Taki K."/>
            <person name="Tammoja K."/>
            <person name="Tan S.L."/>
            <person name="Tang S."/>
            <person name="Taylor M.S."/>
            <person name="Tegner J."/>
            <person name="Teichmann S.A."/>
            <person name="Ueda H.R."/>
            <person name="van Nimwegen E."/>
            <person name="Verardo R."/>
            <person name="Wei C.L."/>
            <person name="Yagi K."/>
            <person name="Yamanishi H."/>
            <person name="Zabarovsky E."/>
            <person name="Zhu S."/>
            <person name="Zimmer A."/>
            <person name="Hide W."/>
            <person name="Bult C."/>
            <person name="Grimmond S.M."/>
            <person name="Teasdale R.D."/>
            <person name="Liu E.T."/>
            <person name="Brusic V."/>
            <person name="Quackenbush J."/>
            <person name="Wahlestedt C."/>
            <person name="Mattick J.S."/>
            <person name="Hume D.A."/>
            <person name="Kai C."/>
            <person name="Sasaki D."/>
            <person name="Tomaru Y."/>
            <person name="Fukuda S."/>
            <person name="Kanamori-Katayama M."/>
            <person name="Suzuki M."/>
            <person name="Aoki J."/>
            <person name="Arakawa T."/>
            <person name="Iida J."/>
            <person name="Imamura K."/>
            <person name="Itoh M."/>
            <person name="Kato T."/>
            <person name="Kawaji H."/>
            <person name="Kawagashira N."/>
            <person name="Kawashima T."/>
            <person name="Kojima M."/>
            <person name="Kondo S."/>
            <person name="Konno H."/>
            <person name="Nakano K."/>
            <person name="Ninomiya N."/>
            <person name="Nishio T."/>
            <person name="Okada M."/>
            <person name="Plessy C."/>
            <person name="Shibata K."/>
            <person name="Shiraki T."/>
            <person name="Suzuki S."/>
            <person name="Tagami M."/>
            <person name="Waki K."/>
            <person name="Watahiki A."/>
            <person name="Okamura-Oho Y."/>
            <person name="Suzuki H."/>
            <person name="Kawai J."/>
            <person name="Hayashizaki Y."/>
        </authorList>
    </citation>
    <scope>NUCLEOTIDE SEQUENCE [LARGE SCALE MRNA]</scope>
    <source>
        <strain>C57BL/6J</strain>
        <strain>NOD</strain>
        <tissue>Bone marrow</tissue>
        <tissue>Embryo</tissue>
        <tissue>Head</tissue>
        <tissue>Heart</tissue>
        <tissue>Kidney</tissue>
    </source>
</reference>
<reference key="4">
    <citation type="journal article" date="2004" name="Genome Res.">
        <title>The status, quality, and expansion of the NIH full-length cDNA project: the Mammalian Gene Collection (MGC).</title>
        <authorList>
            <consortium name="The MGC Project Team"/>
        </authorList>
    </citation>
    <scope>NUCLEOTIDE SEQUENCE [LARGE SCALE MRNA]</scope>
</reference>
<reference key="5">
    <citation type="journal article" date="1992" name="J. Cell. Biochem.">
        <title>Adipogenesis in a myeloid supporting bone marrow stromal cell line.</title>
        <authorList>
            <person name="Gimble J.M."/>
            <person name="Hua X."/>
            <person name="Youkhana K."/>
            <person name="Bass H.W."/>
            <person name="Medina K."/>
            <person name="Sullivan M."/>
            <person name="Greenberger J.S."/>
            <person name="Wang C.S."/>
        </authorList>
    </citation>
    <scope>NUCLEOTIDE SEQUENCE [MRNA] OF 1-183</scope>
</reference>
<reference key="6">
    <citation type="journal article" date="1991" name="Gene">
        <title>Cloning and characterization of the promoter of the murine lipoprotein lipase-encoding gene: structural and functional analysis.</title>
        <authorList>
            <person name="Hua X."/>
            <person name="Enerbaeck S."/>
            <person name="Hudson J."/>
            <person name="Youkhana K."/>
            <person name="Gimble J.M."/>
        </authorList>
    </citation>
    <scope>NUCLEOTIDE SEQUENCE [GENOMIC DNA] OF 1-29</scope>
    <source>
        <strain>BALB/cJ</strain>
        <tissue>Liver</tissue>
    </source>
</reference>
<reference key="7">
    <citation type="journal article" date="1987" name="J. Biol. Chem.">
        <title>The sequence of cDNA encoding lipoprotein lipase. A member of a lipase gene family.</title>
        <authorList>
            <person name="Kirchgessner T.G."/>
            <person name="Svenson K.L."/>
            <person name="Lusis A.J."/>
            <person name="Schotz M.C."/>
        </authorList>
    </citation>
    <scope>NUCLEOTIDE SEQUENCE [MRNA] OF 9-474</scope>
</reference>
<reference key="8">
    <citation type="journal article" date="1995" name="J. Clin. Invest.">
        <title>Severe hypertriglyceridemia, reduced high density lipoprotein, and neonatal death in lipoprotein lipase knockout mice. Mild hypertriglyceridemia with impaired very low density lipoprotein clearance in heterozygotes.</title>
        <authorList>
            <person name="Weinstock P.H."/>
            <person name="Bisgaier C.L."/>
            <person name="Aalto-Setaelae K."/>
            <person name="Radner H."/>
            <person name="Ramakrishnan R."/>
            <person name="Levak-Frank S."/>
            <person name="Essenburg A.D."/>
            <person name="Zechner R."/>
            <person name="Breslow J.L."/>
        </authorList>
    </citation>
    <scope>FUNCTION</scope>
    <scope>CATALYTIC ACTIVITY</scope>
    <scope>DISRUPTION PHENOTYPE</scope>
</reference>
<reference key="9">
    <citation type="journal article" date="2007" name="Cell Metab.">
        <title>Glycosylphosphatidylinositol-anchored high-density lipoprotein-binding protein 1 plays a critical role in the lipolytic processing of chylomicrons.</title>
        <authorList>
            <person name="Beigneux A.P."/>
            <person name="Davies B.S.J."/>
            <person name="Gin P."/>
            <person name="Weinstein M.M."/>
            <person name="Farber E."/>
            <person name="Qiao X."/>
            <person name="Peale F."/>
            <person name="Bunting S."/>
            <person name="Walzem R.L."/>
            <person name="Wong J.S."/>
            <person name="Blaner W.S."/>
            <person name="Ding Z.-M."/>
            <person name="Melford K."/>
            <person name="Wongsiriroj N."/>
            <person name="Shu X."/>
            <person name="de Sauvage F."/>
            <person name="Ryan R.O."/>
            <person name="Fong L.G."/>
            <person name="Bensadoun A."/>
            <person name="Young S.G."/>
        </authorList>
    </citation>
    <scope>INTERACTION WITH GPIHBP1</scope>
    <scope>SUBCELLULAR LOCATION</scope>
    <scope>TISSUE SPECIFICITY</scope>
</reference>
<reference key="10">
    <citation type="journal article" date="2010" name="Cell">
        <title>A tissue-specific atlas of mouse protein phosphorylation and expression.</title>
        <authorList>
            <person name="Huttlin E.L."/>
            <person name="Jedrychowski M.P."/>
            <person name="Elias J.E."/>
            <person name="Goswami T."/>
            <person name="Rad R."/>
            <person name="Beausoleil S.A."/>
            <person name="Villen J."/>
            <person name="Haas W."/>
            <person name="Sowa M.E."/>
            <person name="Gygi S.P."/>
        </authorList>
    </citation>
    <scope>IDENTIFICATION BY MASS SPECTROMETRY [LARGE SCALE ANALYSIS]</scope>
    <source>
        <tissue>Brown adipose tissue</tissue>
        <tissue>Heart</tissue>
        <tissue>Kidney</tissue>
    </source>
</reference>
<reference key="11">
    <citation type="journal article" date="2010" name="Cell Metab.">
        <title>GPIHBP1 is responsible for the entry of lipoprotein lipase into capillaries.</title>
        <authorList>
            <person name="Davies B.S."/>
            <person name="Beigneux A.P."/>
            <person name="Barnes R.H. II"/>
            <person name="Tu Y."/>
            <person name="Gin P."/>
            <person name="Weinstein M.M."/>
            <person name="Nobumori C."/>
            <person name="Nyren R."/>
            <person name="Goldberg I."/>
            <person name="Olivecrona G."/>
            <person name="Bensadoun A."/>
            <person name="Young S.G."/>
            <person name="Fong L.G."/>
        </authorList>
    </citation>
    <scope>FUNCTION</scope>
    <scope>SUBCELLULAR LOCATION</scope>
    <scope>INTERACTION WITH GPIHBP1</scope>
    <scope>TISSUE SPECIFICITY</scope>
</reference>
<reference key="12">
    <citation type="journal article" date="2014" name="Cell Metab.">
        <title>The ER-associated degradation adaptor protein Sel1L regulates LPL secretion and lipid metabolism.</title>
        <authorList>
            <person name="Sha H."/>
            <person name="Sun S."/>
            <person name="Francisco A.B."/>
            <person name="Ehrhardt N."/>
            <person name="Xue Z."/>
            <person name="Liu L."/>
            <person name="Lawrence P."/>
            <person name="Mattijssen F."/>
            <person name="Guber R.D."/>
            <person name="Panhwar M.S."/>
            <person name="Brenna J.T."/>
            <person name="Shi H."/>
            <person name="Xue B."/>
            <person name="Kersten S."/>
            <person name="Bensadoun A."/>
            <person name="Peterfy M."/>
            <person name="Long Q."/>
            <person name="Qi L."/>
        </authorList>
    </citation>
    <scope>INTERACTION WITH LMF1 AND SEL1L</scope>
    <scope>SUBUNIT</scope>
    <scope>SUBCELLULAR LOCATION</scope>
    <scope>TISSUE SPECIFICITY</scope>
    <scope>GLYCOSYLATION</scope>
</reference>
<reference key="13">
    <citation type="journal article" date="2014" name="Cell Metab.">
        <title>The GPIHBP1-LPL complex is responsible for the margination of triglyceride-rich lipoproteins in capillaries.</title>
        <authorList>
            <person name="Goulbourne C.N."/>
            <person name="Gin P."/>
            <person name="Tatar A."/>
            <person name="Nobumori C."/>
            <person name="Hoenger A."/>
            <person name="Jiang H."/>
            <person name="Grovenor C.R."/>
            <person name="Adeyo O."/>
            <person name="Esko J.D."/>
            <person name="Goldberg I.J."/>
            <person name="Reue K."/>
            <person name="Tontonoz P."/>
            <person name="Bensadoun A."/>
            <person name="Beigneux A.P."/>
            <person name="Young S.G."/>
            <person name="Fong L.G."/>
        </authorList>
    </citation>
    <scope>FUNCTION</scope>
    <scope>SUBCELLULAR LOCATION</scope>
    <scope>INTERACTION WITH GPIHBP1</scope>
</reference>
<reference key="14">
    <citation type="journal article" date="2017" name="J. Lipid Res.">
        <title>Mobility of 'HSPG-bound' LPL explains how LPL is able to reach GPIHBP1 on capillaries.</title>
        <authorList>
            <person name="Allan C.M."/>
            <person name="Larsson M."/>
            <person name="Jung R.S."/>
            <person name="Ploug M."/>
            <person name="Bensadoun A."/>
            <person name="Beigneux A.P."/>
            <person name="Fong L.G."/>
            <person name="Young S.G."/>
        </authorList>
    </citation>
    <scope>FUNCTION</scope>
    <scope>INTERACTION WITH GPIHBP1</scope>
    <scope>SUBCELLULAR LOCATION</scope>
    <scope>TISSUE SPECIFICITY</scope>
</reference>
<keyword id="KW-0106">Calcium</keyword>
<keyword id="KW-1003">Cell membrane</keyword>
<keyword id="KW-0162">Chylomicron</keyword>
<keyword id="KW-1015">Disulfide bond</keyword>
<keyword id="KW-0272">Extracellular matrix</keyword>
<keyword id="KW-0325">Glycoprotein</keyword>
<keyword id="KW-0358">Heparin-binding</keyword>
<keyword id="KW-0378">Hydrolase</keyword>
<keyword id="KW-0442">Lipid degradation</keyword>
<keyword id="KW-0443">Lipid metabolism</keyword>
<keyword id="KW-0472">Membrane</keyword>
<keyword id="KW-0479">Metal-binding</keyword>
<keyword id="KW-0944">Nitration</keyword>
<keyword id="KW-1185">Reference proteome</keyword>
<keyword id="KW-0964">Secreted</keyword>
<keyword id="KW-0732">Signal</keyword>
<keyword id="KW-0850">VLDL</keyword>
<sequence>MESKALLLVVLGVWLQSLTAFRGGVAAADAGRDFSDIESKFALRTPEDTAEDTCHLIPGLADSVSNCHFNHSSKTFVVIHGWTVTGMYESWVPKLVAALYKREPDSNVIVVDWLYRAQQHYPVSAGYTKLVGNDVARFINWMEEEFNYPLDNVHLLGYSLGAHAAGVAGSLTNKKVNRITGLDPAGPNFEYAEAPSRLSPDDADFVDVLHTFTRGSPGRSIGIQKPVGHVDIYPNGGTFQPGCNIGEAIRVIAERGLGDVDQLVKCSHERSIHLFIDSLLNEENPSKAYRCNSKEAFEKGLCLSCRKNRCNNLGYEINKVRAKRSSKMYLKTRSQMPYKVFHYQVKIHFSGTEDGKQHNQAFEISLYGTVAESENIPFTLPEVSTNKTYSFLIYTEVDIGELLMMKLKWISDSYFSWPDWWSSPSFVIERIRVKAGETQKKVIFCAREKVSHLQKGKDSAVFVKCHDKSLKKSG</sequence>
<dbReference type="EC" id="3.1.1.34" evidence="13"/>
<dbReference type="EC" id="3.1.1.32" evidence="1"/>
<dbReference type="EMBL" id="M60847">
    <property type="protein sequence ID" value="AAA39441.1"/>
    <property type="molecule type" value="Genomic_DNA"/>
</dbReference>
<dbReference type="EMBL" id="M60838">
    <property type="protein sequence ID" value="AAA39441.1"/>
    <property type="status" value="JOINED"/>
    <property type="molecule type" value="Genomic_DNA"/>
</dbReference>
<dbReference type="EMBL" id="M60839">
    <property type="protein sequence ID" value="AAA39441.1"/>
    <property type="status" value="JOINED"/>
    <property type="molecule type" value="Genomic_DNA"/>
</dbReference>
<dbReference type="EMBL" id="M60840">
    <property type="protein sequence ID" value="AAA39441.1"/>
    <property type="status" value="JOINED"/>
    <property type="molecule type" value="Genomic_DNA"/>
</dbReference>
<dbReference type="EMBL" id="M60842">
    <property type="protein sequence ID" value="AAA39441.1"/>
    <property type="status" value="JOINED"/>
    <property type="molecule type" value="Genomic_DNA"/>
</dbReference>
<dbReference type="EMBL" id="M60843">
    <property type="protein sequence ID" value="AAA39441.1"/>
    <property type="status" value="JOINED"/>
    <property type="molecule type" value="Genomic_DNA"/>
</dbReference>
<dbReference type="EMBL" id="M60844">
    <property type="protein sequence ID" value="AAA39441.1"/>
    <property type="status" value="JOINED"/>
    <property type="molecule type" value="Genomic_DNA"/>
</dbReference>
<dbReference type="EMBL" id="M60845">
    <property type="protein sequence ID" value="AAA39441.1"/>
    <property type="status" value="JOINED"/>
    <property type="molecule type" value="Genomic_DNA"/>
</dbReference>
<dbReference type="EMBL" id="M60846">
    <property type="protein sequence ID" value="AAA39441.1"/>
    <property type="status" value="JOINED"/>
    <property type="molecule type" value="Genomic_DNA"/>
</dbReference>
<dbReference type="EMBL" id="AK002645">
    <property type="protein sequence ID" value="BAB22256.1"/>
    <property type="molecule type" value="mRNA"/>
</dbReference>
<dbReference type="EMBL" id="AK017272">
    <property type="status" value="NOT_ANNOTATED_CDS"/>
    <property type="molecule type" value="mRNA"/>
</dbReference>
<dbReference type="EMBL" id="AK045064">
    <property type="protein sequence ID" value="BAC32204.1"/>
    <property type="molecule type" value="mRNA"/>
</dbReference>
<dbReference type="EMBL" id="AK086023">
    <property type="protein sequence ID" value="BAC39594.1"/>
    <property type="molecule type" value="mRNA"/>
</dbReference>
<dbReference type="EMBL" id="AK150355">
    <property type="protein sequence ID" value="BAE29491.1"/>
    <property type="molecule type" value="mRNA"/>
</dbReference>
<dbReference type="EMBL" id="AK150375">
    <property type="protein sequence ID" value="BAE29507.1"/>
    <property type="molecule type" value="mRNA"/>
</dbReference>
<dbReference type="EMBL" id="AK150457">
    <property type="protein sequence ID" value="BAE29577.1"/>
    <property type="molecule type" value="mRNA"/>
</dbReference>
<dbReference type="EMBL" id="AK150488">
    <property type="protein sequence ID" value="BAE29604.1"/>
    <property type="molecule type" value="mRNA"/>
</dbReference>
<dbReference type="EMBL" id="AK150505">
    <property type="protein sequence ID" value="BAE29618.1"/>
    <property type="molecule type" value="mRNA"/>
</dbReference>
<dbReference type="EMBL" id="AK150593">
    <property type="protein sequence ID" value="BAE29686.1"/>
    <property type="molecule type" value="mRNA"/>
</dbReference>
<dbReference type="EMBL" id="AK150672">
    <property type="protein sequence ID" value="BAE29754.1"/>
    <property type="molecule type" value="mRNA"/>
</dbReference>
<dbReference type="EMBL" id="AK151006">
    <property type="protein sequence ID" value="BAE30029.1"/>
    <property type="molecule type" value="mRNA"/>
</dbReference>
<dbReference type="EMBL" id="AK151093">
    <property type="protein sequence ID" value="BAE30105.1"/>
    <property type="molecule type" value="mRNA"/>
</dbReference>
<dbReference type="EMBL" id="AK151105">
    <property type="protein sequence ID" value="BAE30115.1"/>
    <property type="molecule type" value="mRNA"/>
</dbReference>
<dbReference type="EMBL" id="AK151369">
    <property type="protein sequence ID" value="BAE30343.1"/>
    <property type="molecule type" value="mRNA"/>
</dbReference>
<dbReference type="EMBL" id="AK151434">
    <property type="protein sequence ID" value="BAE30397.1"/>
    <property type="molecule type" value="mRNA"/>
</dbReference>
<dbReference type="EMBL" id="AK151521">
    <property type="protein sequence ID" value="BAE30470.1"/>
    <property type="molecule type" value="mRNA"/>
</dbReference>
<dbReference type="EMBL" id="AK151540">
    <property type="protein sequence ID" value="BAE30486.1"/>
    <property type="molecule type" value="mRNA"/>
</dbReference>
<dbReference type="EMBL" id="AK151563">
    <property type="protein sequence ID" value="BAE30505.1"/>
    <property type="molecule type" value="mRNA"/>
</dbReference>
<dbReference type="EMBL" id="AK151630">
    <property type="protein sequence ID" value="BAE30564.1"/>
    <property type="molecule type" value="mRNA"/>
</dbReference>
<dbReference type="EMBL" id="AK151679">
    <property type="protein sequence ID" value="BAE30604.1"/>
    <property type="molecule type" value="mRNA"/>
</dbReference>
<dbReference type="EMBL" id="AK151727">
    <property type="protein sequence ID" value="BAE30645.1"/>
    <property type="molecule type" value="mRNA"/>
</dbReference>
<dbReference type="EMBL" id="AK151772">
    <property type="protein sequence ID" value="BAE30678.1"/>
    <property type="molecule type" value="mRNA"/>
</dbReference>
<dbReference type="EMBL" id="AK151801">
    <property type="protein sequence ID" value="BAE30701.1"/>
    <property type="molecule type" value="mRNA"/>
</dbReference>
<dbReference type="EMBL" id="AK151828">
    <property type="protein sequence ID" value="BAE30723.1"/>
    <property type="molecule type" value="mRNA"/>
</dbReference>
<dbReference type="EMBL" id="AK151866">
    <property type="protein sequence ID" value="BAE30754.1"/>
    <property type="molecule type" value="mRNA"/>
</dbReference>
<dbReference type="EMBL" id="AK151870">
    <property type="protein sequence ID" value="BAE30758.1"/>
    <property type="molecule type" value="mRNA"/>
</dbReference>
<dbReference type="EMBL" id="AK151872">
    <property type="protein sequence ID" value="BAE30760.1"/>
    <property type="molecule type" value="mRNA"/>
</dbReference>
<dbReference type="EMBL" id="AK151893">
    <property type="protein sequence ID" value="BAE30777.1"/>
    <property type="molecule type" value="mRNA"/>
</dbReference>
<dbReference type="EMBL" id="AK152014">
    <property type="protein sequence ID" value="BAE30876.1"/>
    <property type="molecule type" value="mRNA"/>
</dbReference>
<dbReference type="EMBL" id="AK152035">
    <property type="protein sequence ID" value="BAE30894.1"/>
    <property type="molecule type" value="mRNA"/>
</dbReference>
<dbReference type="EMBL" id="AK152049">
    <property type="protein sequence ID" value="BAE30905.1"/>
    <property type="molecule type" value="mRNA"/>
</dbReference>
<dbReference type="EMBL" id="AK152053">
    <property type="protein sequence ID" value="BAE30909.1"/>
    <property type="molecule type" value="mRNA"/>
</dbReference>
<dbReference type="EMBL" id="AK152079">
    <property type="protein sequence ID" value="BAE30930.1"/>
    <property type="molecule type" value="mRNA"/>
</dbReference>
<dbReference type="EMBL" id="AK152350">
    <property type="protein sequence ID" value="BAE31144.1"/>
    <property type="molecule type" value="mRNA"/>
</dbReference>
<dbReference type="EMBL" id="AK152657">
    <property type="protein sequence ID" value="BAE31394.1"/>
    <property type="molecule type" value="mRNA"/>
</dbReference>
<dbReference type="EMBL" id="AK153148">
    <property type="protein sequence ID" value="BAE31758.1"/>
    <property type="molecule type" value="mRNA"/>
</dbReference>
<dbReference type="EMBL" id="AK153242">
    <property type="protein sequence ID" value="BAE31834.1"/>
    <property type="molecule type" value="mRNA"/>
</dbReference>
<dbReference type="EMBL" id="AK153425">
    <property type="protein sequence ID" value="BAE31984.1"/>
    <property type="molecule type" value="mRNA"/>
</dbReference>
<dbReference type="EMBL" id="AK159268">
    <property type="protein sequence ID" value="BAE34947.1"/>
    <property type="molecule type" value="mRNA"/>
</dbReference>
<dbReference type="EMBL" id="AK170486">
    <property type="protein sequence ID" value="BAE41828.1"/>
    <property type="molecule type" value="mRNA"/>
</dbReference>
<dbReference type="EMBL" id="BC003305">
    <property type="protein sequence ID" value="AAH03305.1"/>
    <property type="molecule type" value="mRNA"/>
</dbReference>
<dbReference type="EMBL" id="M65258">
    <property type="protein sequence ID" value="AAA39442.1"/>
    <property type="molecule type" value="mRNA"/>
</dbReference>
<dbReference type="EMBL" id="J03302">
    <property type="protein sequence ID" value="AAA39440.1"/>
    <property type="molecule type" value="mRNA"/>
</dbReference>
<dbReference type="EMBL" id="M63335">
    <property type="protein sequence ID" value="AAC04464.1"/>
    <property type="molecule type" value="Genomic_DNA"/>
</dbReference>
<dbReference type="CCDS" id="CCDS40357.1"/>
<dbReference type="PIR" id="A40570">
    <property type="entry name" value="A40570"/>
</dbReference>
<dbReference type="RefSeq" id="NP_032535.2">
    <property type="nucleotide sequence ID" value="NM_008509.2"/>
</dbReference>
<dbReference type="SMR" id="P11152"/>
<dbReference type="BioGRID" id="201196">
    <property type="interactions" value="1"/>
</dbReference>
<dbReference type="FunCoup" id="P11152">
    <property type="interactions" value="265"/>
</dbReference>
<dbReference type="IntAct" id="P11152">
    <property type="interactions" value="5"/>
</dbReference>
<dbReference type="MINT" id="P11152"/>
<dbReference type="STRING" id="10090.ENSMUSP00000015712"/>
<dbReference type="ChEMBL" id="CHEMBL3309051"/>
<dbReference type="ESTHER" id="mouse-lipli">
    <property type="family name" value="Lipoprotein_Lipase"/>
</dbReference>
<dbReference type="GlyCosmos" id="P11152">
    <property type="glycosylation" value="2 sites, No reported glycans"/>
</dbReference>
<dbReference type="GlyGen" id="P11152">
    <property type="glycosylation" value="3 sites, 1 N-linked glycan (1 site), 1 O-linked glycan (1 site)"/>
</dbReference>
<dbReference type="iPTMnet" id="P11152"/>
<dbReference type="PhosphoSitePlus" id="P11152"/>
<dbReference type="SwissPalm" id="P11152"/>
<dbReference type="jPOST" id="P11152"/>
<dbReference type="PaxDb" id="10090-ENSMUSP00000015712"/>
<dbReference type="PeptideAtlas" id="P11152"/>
<dbReference type="ProteomicsDB" id="292096"/>
<dbReference type="Pumba" id="P11152"/>
<dbReference type="Antibodypedia" id="9132">
    <property type="antibodies" value="580 antibodies from 36 providers"/>
</dbReference>
<dbReference type="DNASU" id="16956"/>
<dbReference type="Ensembl" id="ENSMUST00000015712.15">
    <property type="protein sequence ID" value="ENSMUSP00000015712.8"/>
    <property type="gene ID" value="ENSMUSG00000015568.17"/>
</dbReference>
<dbReference type="Ensembl" id="ENSMUST00000168401.2">
    <property type="protein sequence ID" value="ENSMUSP00000132259.2"/>
    <property type="gene ID" value="ENSMUSG00000015568.17"/>
</dbReference>
<dbReference type="GeneID" id="16956"/>
<dbReference type="KEGG" id="mmu:16956"/>
<dbReference type="UCSC" id="uc009lwq.1">
    <property type="organism name" value="mouse"/>
</dbReference>
<dbReference type="AGR" id="MGI:96820"/>
<dbReference type="CTD" id="4023"/>
<dbReference type="MGI" id="MGI:96820">
    <property type="gene designation" value="Lpl"/>
</dbReference>
<dbReference type="VEuPathDB" id="HostDB:ENSMUSG00000015568"/>
<dbReference type="eggNOG" id="ENOG502QQ7P">
    <property type="taxonomic scope" value="Eukaryota"/>
</dbReference>
<dbReference type="GeneTree" id="ENSGT00940000157178"/>
<dbReference type="HOGENOM" id="CLU_027171_1_0_1"/>
<dbReference type="InParanoid" id="P11152"/>
<dbReference type="OMA" id="AIFVKCS"/>
<dbReference type="OrthoDB" id="199913at2759"/>
<dbReference type="PhylomeDB" id="P11152"/>
<dbReference type="TreeFam" id="TF324997"/>
<dbReference type="BRENDA" id="3.1.1.34">
    <property type="organism ID" value="3474"/>
</dbReference>
<dbReference type="Reactome" id="R-MMU-8963889">
    <property type="pathway name" value="Assembly of active LPL and LIPC lipase complexes"/>
</dbReference>
<dbReference type="Reactome" id="R-MMU-8963901">
    <property type="pathway name" value="Chylomicron remodeling"/>
</dbReference>
<dbReference type="Reactome" id="R-MMU-975634">
    <property type="pathway name" value="Retinoid metabolism and transport"/>
</dbReference>
<dbReference type="BioGRID-ORCS" id="16956">
    <property type="hits" value="2 hits in 82 CRISPR screens"/>
</dbReference>
<dbReference type="ChiTaRS" id="Lpl">
    <property type="organism name" value="mouse"/>
</dbReference>
<dbReference type="PRO" id="PR:P11152"/>
<dbReference type="Proteomes" id="UP000000589">
    <property type="component" value="Chromosome 8"/>
</dbReference>
<dbReference type="RNAct" id="P11152">
    <property type="molecule type" value="protein"/>
</dbReference>
<dbReference type="Bgee" id="ENSMUSG00000015568">
    <property type="expression patterns" value="Expressed in epididymal fat pad and 279 other cell types or tissues"/>
</dbReference>
<dbReference type="GO" id="GO:1902494">
    <property type="term" value="C:catalytic complex"/>
    <property type="evidence" value="ECO:0007669"/>
    <property type="project" value="Ensembl"/>
</dbReference>
<dbReference type="GO" id="GO:0009986">
    <property type="term" value="C:cell surface"/>
    <property type="evidence" value="ECO:0000314"/>
    <property type="project" value="BHF-UCL"/>
</dbReference>
<dbReference type="GO" id="GO:0042627">
    <property type="term" value="C:chylomicron"/>
    <property type="evidence" value="ECO:0007669"/>
    <property type="project" value="UniProtKB-KW"/>
</dbReference>
<dbReference type="GO" id="GO:0005576">
    <property type="term" value="C:extracellular region"/>
    <property type="evidence" value="ECO:0000316"/>
    <property type="project" value="MGI"/>
</dbReference>
<dbReference type="GO" id="GO:0005615">
    <property type="term" value="C:extracellular space"/>
    <property type="evidence" value="ECO:0000314"/>
    <property type="project" value="BHF-UCL"/>
</dbReference>
<dbReference type="GO" id="GO:0005886">
    <property type="term" value="C:plasma membrane"/>
    <property type="evidence" value="ECO:0007669"/>
    <property type="project" value="UniProtKB-SubCell"/>
</dbReference>
<dbReference type="GO" id="GO:0034361">
    <property type="term" value="C:very-low-density lipoprotein particle"/>
    <property type="evidence" value="ECO:0007669"/>
    <property type="project" value="UniProtKB-KW"/>
</dbReference>
<dbReference type="GO" id="GO:0034185">
    <property type="term" value="F:apolipoprotein binding"/>
    <property type="evidence" value="ECO:0007669"/>
    <property type="project" value="Ensembl"/>
</dbReference>
<dbReference type="GO" id="GO:0005509">
    <property type="term" value="F:calcium ion binding"/>
    <property type="evidence" value="ECO:0007669"/>
    <property type="project" value="Ensembl"/>
</dbReference>
<dbReference type="GO" id="GO:0043395">
    <property type="term" value="F:heparan sulfate proteoglycan binding"/>
    <property type="evidence" value="ECO:0000250"/>
    <property type="project" value="UniProtKB"/>
</dbReference>
<dbReference type="GO" id="GO:0008201">
    <property type="term" value="F:heparin binding"/>
    <property type="evidence" value="ECO:0000250"/>
    <property type="project" value="UniProtKB"/>
</dbReference>
<dbReference type="GO" id="GO:0004465">
    <property type="term" value="F:lipoprotein lipase activity"/>
    <property type="evidence" value="ECO:0000314"/>
    <property type="project" value="MGI"/>
</dbReference>
<dbReference type="GO" id="GO:0071813">
    <property type="term" value="F:lipoprotein particle binding"/>
    <property type="evidence" value="ECO:0000250"/>
    <property type="project" value="UniProtKB"/>
</dbReference>
<dbReference type="GO" id="GO:0008970">
    <property type="term" value="F:phospholipase A1 activity"/>
    <property type="evidence" value="ECO:0000250"/>
    <property type="project" value="UniProtKB"/>
</dbReference>
<dbReference type="GO" id="GO:0042803">
    <property type="term" value="F:protein homodimerization activity"/>
    <property type="evidence" value="ECO:0007669"/>
    <property type="project" value="Ensembl"/>
</dbReference>
<dbReference type="GO" id="GO:0005102">
    <property type="term" value="F:signaling receptor binding"/>
    <property type="evidence" value="ECO:0007669"/>
    <property type="project" value="Ensembl"/>
</dbReference>
<dbReference type="GO" id="GO:0004806">
    <property type="term" value="F:triacylglycerol lipase activity"/>
    <property type="evidence" value="ECO:0000314"/>
    <property type="project" value="BHF-UCL"/>
</dbReference>
<dbReference type="GO" id="GO:0071398">
    <property type="term" value="P:cellular response to fatty acid"/>
    <property type="evidence" value="ECO:0000314"/>
    <property type="project" value="ARUK-UCL"/>
</dbReference>
<dbReference type="GO" id="GO:0031670">
    <property type="term" value="P:cellular response to nutrient"/>
    <property type="evidence" value="ECO:0000314"/>
    <property type="project" value="ARUK-UCL"/>
</dbReference>
<dbReference type="GO" id="GO:0042632">
    <property type="term" value="P:cholesterol homeostasis"/>
    <property type="evidence" value="ECO:0007669"/>
    <property type="project" value="Ensembl"/>
</dbReference>
<dbReference type="GO" id="GO:0034371">
    <property type="term" value="P:chylomicron remodeling"/>
    <property type="evidence" value="ECO:0000250"/>
    <property type="project" value="UniProtKB"/>
</dbReference>
<dbReference type="GO" id="GO:0006633">
    <property type="term" value="P:fatty acid biosynthetic process"/>
    <property type="evidence" value="ECO:0007669"/>
    <property type="project" value="Ensembl"/>
</dbReference>
<dbReference type="GO" id="GO:0006631">
    <property type="term" value="P:fatty acid metabolic process"/>
    <property type="evidence" value="ECO:0000250"/>
    <property type="project" value="UniProtKB"/>
</dbReference>
<dbReference type="GO" id="GO:0055096">
    <property type="term" value="P:low-density lipoprotein particle mediated signaling"/>
    <property type="evidence" value="ECO:0007669"/>
    <property type="project" value="Ensembl"/>
</dbReference>
<dbReference type="GO" id="GO:1904179">
    <property type="term" value="P:positive regulation of adipose tissue development"/>
    <property type="evidence" value="ECO:0007669"/>
    <property type="project" value="Ensembl"/>
</dbReference>
<dbReference type="GO" id="GO:2000343">
    <property type="term" value="P:positive regulation of chemokine (C-X-C motif) ligand 2 production"/>
    <property type="evidence" value="ECO:0000316"/>
    <property type="project" value="ARUK-UCL"/>
</dbReference>
<dbReference type="GO" id="GO:0010886">
    <property type="term" value="P:positive regulation of cholesterol storage"/>
    <property type="evidence" value="ECO:0007669"/>
    <property type="project" value="Ensembl"/>
</dbReference>
<dbReference type="GO" id="GO:0045600">
    <property type="term" value="P:positive regulation of fat cell differentiation"/>
    <property type="evidence" value="ECO:0007669"/>
    <property type="project" value="Ensembl"/>
</dbReference>
<dbReference type="GO" id="GO:0050729">
    <property type="term" value="P:positive regulation of inflammatory response"/>
    <property type="evidence" value="ECO:0000316"/>
    <property type="project" value="ARUK-UCL"/>
</dbReference>
<dbReference type="GO" id="GO:0032731">
    <property type="term" value="P:positive regulation of interleukin-1 beta production"/>
    <property type="evidence" value="ECO:0000316"/>
    <property type="project" value="ARUK-UCL"/>
</dbReference>
<dbReference type="GO" id="GO:0032755">
    <property type="term" value="P:positive regulation of interleukin-6 production"/>
    <property type="evidence" value="ECO:0000316"/>
    <property type="project" value="ARUK-UCL"/>
</dbReference>
<dbReference type="GO" id="GO:0010744">
    <property type="term" value="P:positive regulation of macrophage derived foam cell differentiation"/>
    <property type="evidence" value="ECO:0000316"/>
    <property type="project" value="BHF-UCL"/>
</dbReference>
<dbReference type="GO" id="GO:0032760">
    <property type="term" value="P:positive regulation of tumor necrosis factor production"/>
    <property type="evidence" value="ECO:0000316"/>
    <property type="project" value="ARUK-UCL"/>
</dbReference>
<dbReference type="GO" id="GO:0009617">
    <property type="term" value="P:response to bacterium"/>
    <property type="evidence" value="ECO:0000270"/>
    <property type="project" value="MGI"/>
</dbReference>
<dbReference type="GO" id="GO:0001523">
    <property type="term" value="P:retinoid metabolic process"/>
    <property type="evidence" value="ECO:0000316"/>
    <property type="project" value="MGI"/>
</dbReference>
<dbReference type="GO" id="GO:0019433">
    <property type="term" value="P:triglyceride catabolic process"/>
    <property type="evidence" value="ECO:0000314"/>
    <property type="project" value="BHF-UCL"/>
</dbReference>
<dbReference type="GO" id="GO:0070328">
    <property type="term" value="P:triglyceride homeostasis"/>
    <property type="evidence" value="ECO:0007669"/>
    <property type="project" value="Ensembl"/>
</dbReference>
<dbReference type="GO" id="GO:0034447">
    <property type="term" value="P:very-low-density lipoprotein particle clearance"/>
    <property type="evidence" value="ECO:0000314"/>
    <property type="project" value="BHF-UCL"/>
</dbReference>
<dbReference type="GO" id="GO:0034372">
    <property type="term" value="P:very-low-density lipoprotein particle remodeling"/>
    <property type="evidence" value="ECO:0007669"/>
    <property type="project" value="Ensembl"/>
</dbReference>
<dbReference type="CDD" id="cd00707">
    <property type="entry name" value="Pancreat_lipase_like"/>
    <property type="match status" value="1"/>
</dbReference>
<dbReference type="CDD" id="cd01758">
    <property type="entry name" value="PLAT_LPL"/>
    <property type="match status" value="1"/>
</dbReference>
<dbReference type="FunFam" id="2.60.60.20:FF:000006">
    <property type="entry name" value="Lipoprotein lipase"/>
    <property type="match status" value="1"/>
</dbReference>
<dbReference type="FunFam" id="3.40.50.1820:FF:000031">
    <property type="entry name" value="Lipoprotein lipase"/>
    <property type="match status" value="1"/>
</dbReference>
<dbReference type="Gene3D" id="3.40.50.1820">
    <property type="entry name" value="alpha/beta hydrolase"/>
    <property type="match status" value="1"/>
</dbReference>
<dbReference type="Gene3D" id="2.60.60.20">
    <property type="entry name" value="PLAT/LH2 domain"/>
    <property type="match status" value="1"/>
</dbReference>
<dbReference type="InterPro" id="IPR029058">
    <property type="entry name" value="AB_hydrolase_fold"/>
</dbReference>
<dbReference type="InterPro" id="IPR013818">
    <property type="entry name" value="Lipase"/>
</dbReference>
<dbReference type="InterPro" id="IPR016272">
    <property type="entry name" value="Lipase_LIPH"/>
</dbReference>
<dbReference type="InterPro" id="IPR033906">
    <property type="entry name" value="Lipase_N"/>
</dbReference>
<dbReference type="InterPro" id="IPR002330">
    <property type="entry name" value="Lipo_Lipase"/>
</dbReference>
<dbReference type="InterPro" id="IPR001024">
    <property type="entry name" value="PLAT/LH2_dom"/>
</dbReference>
<dbReference type="InterPro" id="IPR036392">
    <property type="entry name" value="PLAT/LH2_dom_sf"/>
</dbReference>
<dbReference type="InterPro" id="IPR000734">
    <property type="entry name" value="TAG_lipase"/>
</dbReference>
<dbReference type="NCBIfam" id="TIGR03230">
    <property type="entry name" value="lipo_lipase"/>
    <property type="match status" value="1"/>
</dbReference>
<dbReference type="PANTHER" id="PTHR11610">
    <property type="entry name" value="LIPASE"/>
    <property type="match status" value="1"/>
</dbReference>
<dbReference type="PANTHER" id="PTHR11610:SF3">
    <property type="entry name" value="LIPOPROTEIN LIPASE"/>
    <property type="match status" value="1"/>
</dbReference>
<dbReference type="Pfam" id="PF00151">
    <property type="entry name" value="Lipase"/>
    <property type="match status" value="1"/>
</dbReference>
<dbReference type="Pfam" id="PF01477">
    <property type="entry name" value="PLAT"/>
    <property type="match status" value="1"/>
</dbReference>
<dbReference type="PIRSF" id="PIRSF000865">
    <property type="entry name" value="Lipoprotein_lipase_LIPH"/>
    <property type="match status" value="1"/>
</dbReference>
<dbReference type="PRINTS" id="PR00822">
    <property type="entry name" value="LIPOLIPASE"/>
</dbReference>
<dbReference type="PRINTS" id="PR00821">
    <property type="entry name" value="TAGLIPASE"/>
</dbReference>
<dbReference type="SMART" id="SM00308">
    <property type="entry name" value="LH2"/>
    <property type="match status" value="1"/>
</dbReference>
<dbReference type="SUPFAM" id="SSF53474">
    <property type="entry name" value="alpha/beta-Hydrolases"/>
    <property type="match status" value="1"/>
</dbReference>
<dbReference type="SUPFAM" id="SSF49723">
    <property type="entry name" value="Lipase/lipooxygenase domain (PLAT/LH2 domain)"/>
    <property type="match status" value="1"/>
</dbReference>
<dbReference type="PROSITE" id="PS00120">
    <property type="entry name" value="LIPASE_SER"/>
    <property type="match status" value="1"/>
</dbReference>
<dbReference type="PROSITE" id="PS50095">
    <property type="entry name" value="PLAT"/>
    <property type="match status" value="1"/>
</dbReference>
<proteinExistence type="evidence at protein level"/>
<evidence type="ECO:0000250" key="1">
    <source>
        <dbReference type="UniProtKB" id="P06858"/>
    </source>
</evidence>
<evidence type="ECO:0000250" key="2">
    <source>
        <dbReference type="UniProtKB" id="P11151"/>
    </source>
</evidence>
<evidence type="ECO:0000250" key="3">
    <source>
        <dbReference type="UniProtKB" id="Q06000"/>
    </source>
</evidence>
<evidence type="ECO:0000255" key="4"/>
<evidence type="ECO:0000255" key="5">
    <source>
        <dbReference type="PROSITE-ProRule" id="PRU00152"/>
    </source>
</evidence>
<evidence type="ECO:0000255" key="6">
    <source>
        <dbReference type="PROSITE-ProRule" id="PRU10037"/>
    </source>
</evidence>
<evidence type="ECO:0000269" key="7">
    <source>
    </source>
</evidence>
<evidence type="ECO:0000269" key="8">
    <source>
    </source>
</evidence>
<evidence type="ECO:0000269" key="9">
    <source>
    </source>
</evidence>
<evidence type="ECO:0000269" key="10">
    <source>
    </source>
</evidence>
<evidence type="ECO:0000269" key="11">
    <source>
    </source>
</evidence>
<evidence type="ECO:0000269" key="12">
    <source>
    </source>
</evidence>
<evidence type="ECO:0000269" key="13">
    <source>
    </source>
</evidence>
<evidence type="ECO:0000305" key="14"/>
<organism>
    <name type="scientific">Mus musculus</name>
    <name type="common">Mouse</name>
    <dbReference type="NCBI Taxonomy" id="10090"/>
    <lineage>
        <taxon>Eukaryota</taxon>
        <taxon>Metazoa</taxon>
        <taxon>Chordata</taxon>
        <taxon>Craniata</taxon>
        <taxon>Vertebrata</taxon>
        <taxon>Euteleostomi</taxon>
        <taxon>Mammalia</taxon>
        <taxon>Eutheria</taxon>
        <taxon>Euarchontoglires</taxon>
        <taxon>Glires</taxon>
        <taxon>Rodentia</taxon>
        <taxon>Myomorpha</taxon>
        <taxon>Muroidea</taxon>
        <taxon>Muridae</taxon>
        <taxon>Murinae</taxon>
        <taxon>Mus</taxon>
        <taxon>Mus</taxon>
    </lineage>
</organism>
<protein>
    <recommendedName>
        <fullName>Lipoprotein lipase</fullName>
        <shortName>LPL</shortName>
        <ecNumber evidence="13">3.1.1.34</ecNumber>
    </recommendedName>
    <alternativeName>
        <fullName>Phospholipase A1</fullName>
        <ecNumber evidence="1">3.1.1.32</ecNumber>
    </alternativeName>
</protein>
<feature type="signal peptide" evidence="4">
    <location>
        <begin position="1"/>
        <end position="27"/>
    </location>
</feature>
<feature type="chain" id="PRO_0000017776" description="Lipoprotein lipase">
    <location>
        <begin position="28"/>
        <end position="474"/>
    </location>
</feature>
<feature type="domain" description="PLAT" evidence="5">
    <location>
        <begin position="341"/>
        <end position="464"/>
    </location>
</feature>
<feature type="region of interest" description="Interaction with GPIHBP1" evidence="1">
    <location>
        <begin position="32"/>
        <end position="53"/>
    </location>
</feature>
<feature type="region of interest" description="Essential for determining substrate specificity" evidence="1">
    <location>
        <begin position="243"/>
        <end position="266"/>
    </location>
</feature>
<feature type="region of interest" description="Important for interaction with lipoprotein particles" evidence="1">
    <location>
        <begin position="417"/>
        <end position="421"/>
    </location>
</feature>
<feature type="region of interest" description="Important for heparin binding" evidence="1">
    <location>
        <begin position="430"/>
        <end position="434"/>
    </location>
</feature>
<feature type="region of interest" description="Interaction with GPIHBP1" evidence="1">
    <location>
        <begin position="443"/>
        <end position="467"/>
    </location>
</feature>
<feature type="active site" description="Nucleophile" evidence="1">
    <location>
        <position position="159"/>
    </location>
</feature>
<feature type="active site" description="Charge relay system" evidence="6">
    <location>
        <position position="183"/>
    </location>
</feature>
<feature type="active site" description="Charge relay system" evidence="6">
    <location>
        <position position="268"/>
    </location>
</feature>
<feature type="binding site" evidence="1">
    <location>
        <position position="194"/>
    </location>
    <ligand>
        <name>Ca(2+)</name>
        <dbReference type="ChEBI" id="CHEBI:29108"/>
    </ligand>
</feature>
<feature type="binding site" evidence="1">
    <location>
        <position position="197"/>
    </location>
    <ligand>
        <name>Ca(2+)</name>
        <dbReference type="ChEBI" id="CHEBI:29108"/>
    </ligand>
</feature>
<feature type="binding site" evidence="1">
    <location>
        <position position="199"/>
    </location>
    <ligand>
        <name>Ca(2+)</name>
        <dbReference type="ChEBI" id="CHEBI:29108"/>
    </ligand>
</feature>
<feature type="binding site" evidence="1">
    <location>
        <position position="202"/>
    </location>
    <ligand>
        <name>Ca(2+)</name>
        <dbReference type="ChEBI" id="CHEBI:29108"/>
    </ligand>
</feature>
<feature type="modified residue" description="3'-nitrotyrosine" evidence="3">
    <location>
        <position position="121"/>
    </location>
</feature>
<feature type="modified residue" description="3'-nitrotyrosine" evidence="3">
    <location>
        <position position="191"/>
    </location>
</feature>
<feature type="modified residue" description="3'-nitrotyrosine" evidence="3">
    <location>
        <position position="343"/>
    </location>
</feature>
<feature type="glycosylation site" description="N-linked (GlcNAc...) asparagine" evidence="4">
    <location>
        <position position="70"/>
    </location>
</feature>
<feature type="glycosylation site" description="N-linked (GlcNAc...) asparagine" evidence="4">
    <location>
        <position position="386"/>
    </location>
</feature>
<feature type="disulfide bond" evidence="5">
    <location>
        <begin position="54"/>
        <end position="67"/>
    </location>
</feature>
<feature type="disulfide bond" evidence="5">
    <location>
        <begin position="243"/>
        <end position="266"/>
    </location>
</feature>
<feature type="disulfide bond" evidence="5">
    <location>
        <begin position="291"/>
        <end position="310"/>
    </location>
</feature>
<feature type="disulfide bond" evidence="5">
    <location>
        <begin position="302"/>
        <end position="305"/>
    </location>
</feature>
<feature type="disulfide bond" evidence="5">
    <location>
        <begin position="445"/>
        <end position="465"/>
    </location>
</feature>
<feature type="sequence conflict" description="In Ref. 1; no nucleotide entry." evidence="14" ref="1">
    <original>K</original>
    <variation>Y</variation>
    <location>
        <position position="129"/>
    </location>
</feature>
<feature type="sequence conflict" description="In Ref. 2; AAA39441." evidence="14" ref="2">
    <original>N</original>
    <variation>K</variation>
    <location>
        <position position="147"/>
    </location>
</feature>
<feature type="sequence conflict" description="In Ref. 1; no nucleotide entry." evidence="14" ref="1">
    <original>D</original>
    <variation>N</variation>
    <location>
        <position position="354"/>
    </location>
</feature>
<feature type="sequence conflict" description="In Ref. 1; no nucleotide entry." evidence="14" ref="1">
    <original>I</original>
    <variation>M</variation>
    <location>
        <position position="410"/>
    </location>
</feature>
<comment type="function">
    <text evidence="1 8 9 12 13">Key enzyme in triglyceride metabolism. Catalyzes the hydrolysis of triglycerides from circulating chylomicrons and very low density lipoproteins (VLDL), and thereby plays an important role in lipid clearance from the blood stream, lipid utilization and storage (PubMed:8675619). Although it has both phospholipase and triglyceride lipase activities it is primarily a triglyceride lipase with low but detectable phospholipase activity (By similarity). Mediates margination of triglyceride-rich lipoprotein particles in capillaries (PubMed:24726386). Recruited to its site of action on vascular endothelium by binding to GPIHBP1 and cell surface heparan sulfate proteoglycans (PubMed:20620994, PubMed:24726386, PubMed:27811232).</text>
</comment>
<comment type="catalytic activity">
    <reaction evidence="13">
        <text>a triacylglycerol + H2O = a diacylglycerol + a fatty acid + H(+)</text>
        <dbReference type="Rhea" id="RHEA:12044"/>
        <dbReference type="ChEBI" id="CHEBI:15377"/>
        <dbReference type="ChEBI" id="CHEBI:15378"/>
        <dbReference type="ChEBI" id="CHEBI:17855"/>
        <dbReference type="ChEBI" id="CHEBI:18035"/>
        <dbReference type="ChEBI" id="CHEBI:28868"/>
        <dbReference type="EC" id="3.1.1.34"/>
    </reaction>
</comment>
<comment type="catalytic activity">
    <reaction evidence="1">
        <text>a 1,2-diacyl-sn-glycero-3-phosphocholine + H2O = a 2-acyl-sn-glycero-3-phosphocholine + a fatty acid + H(+)</text>
        <dbReference type="Rhea" id="RHEA:18689"/>
        <dbReference type="ChEBI" id="CHEBI:15377"/>
        <dbReference type="ChEBI" id="CHEBI:15378"/>
        <dbReference type="ChEBI" id="CHEBI:28868"/>
        <dbReference type="ChEBI" id="CHEBI:57643"/>
        <dbReference type="ChEBI" id="CHEBI:57875"/>
        <dbReference type="EC" id="3.1.1.32"/>
    </reaction>
</comment>
<comment type="catalytic activity">
    <reaction evidence="1">
        <text>1,2,3-tri-(9Z-octadecenoyl)-glycerol + H2O = di-(9Z)-octadecenoylglycerol + (9Z)-octadecenoate + H(+)</text>
        <dbReference type="Rhea" id="RHEA:38575"/>
        <dbReference type="ChEBI" id="CHEBI:15377"/>
        <dbReference type="ChEBI" id="CHEBI:15378"/>
        <dbReference type="ChEBI" id="CHEBI:30823"/>
        <dbReference type="ChEBI" id="CHEBI:53753"/>
        <dbReference type="ChEBI" id="CHEBI:75945"/>
    </reaction>
    <physiologicalReaction direction="left-to-right" evidence="1">
        <dbReference type="Rhea" id="RHEA:38576"/>
    </physiologicalReaction>
</comment>
<comment type="catalytic activity">
    <reaction evidence="1">
        <text>1,2-di-(9Z-octadecenoyl)-sn-glycero-3-phosphocholine + H2O = (9Z-octadecenoyl)-sn-glycero-3-phosphocholine + (9Z)-octadecenoate + H(+)</text>
        <dbReference type="Rhea" id="RHEA:38699"/>
        <dbReference type="ChEBI" id="CHEBI:15377"/>
        <dbReference type="ChEBI" id="CHEBI:15378"/>
        <dbReference type="ChEBI" id="CHEBI:30823"/>
        <dbReference type="ChEBI" id="CHEBI:74669"/>
        <dbReference type="ChEBI" id="CHEBI:76083"/>
    </reaction>
    <physiologicalReaction direction="left-to-right" evidence="1">
        <dbReference type="Rhea" id="RHEA:38700"/>
    </physiologicalReaction>
</comment>
<comment type="catalytic activity">
    <reaction evidence="1">
        <text>1,2,3-tributanoylglycerol + H2O = dibutanoylglycerol + butanoate + H(+)</text>
        <dbReference type="Rhea" id="RHEA:40475"/>
        <dbReference type="ChEBI" id="CHEBI:15377"/>
        <dbReference type="ChEBI" id="CHEBI:15378"/>
        <dbReference type="ChEBI" id="CHEBI:17968"/>
        <dbReference type="ChEBI" id="CHEBI:35020"/>
        <dbReference type="ChEBI" id="CHEBI:76478"/>
    </reaction>
    <physiologicalReaction direction="left-to-right" evidence="1">
        <dbReference type="Rhea" id="RHEA:40476"/>
    </physiologicalReaction>
</comment>
<comment type="catalytic activity">
    <reaction evidence="1">
        <text>1,2-dihexadecanoyl-sn-glycero-3-phosphocholine + H2O = hexadecanoyl-sn-glycero-3-phosphocholine + hexadecanoate + H(+)</text>
        <dbReference type="Rhea" id="RHEA:41384"/>
        <dbReference type="ChEBI" id="CHEBI:7896"/>
        <dbReference type="ChEBI" id="CHEBI:15377"/>
        <dbReference type="ChEBI" id="CHEBI:15378"/>
        <dbReference type="ChEBI" id="CHEBI:64563"/>
        <dbReference type="ChEBI" id="CHEBI:72999"/>
    </reaction>
    <physiologicalReaction direction="left-to-right" evidence="1">
        <dbReference type="Rhea" id="RHEA:41385"/>
    </physiologicalReaction>
</comment>
<comment type="activity regulation">
    <text evidence="1 2">The apolipoprotein APOC2 acts as a coactivator of LPL activity (By similarity). Ca(2+) binding promotes protein stability and formation of the active homodimer. Interaction with GPIHBP1 protects LPL against inactivation by ANGPTL4 (By similarity).</text>
</comment>
<comment type="subunit">
    <text evidence="1 2 7 8 9 10">Homodimer (PubMed:25066055). Interacts with GPIHBP1 with 1:1 stoichiometry (PubMed:17403372, PubMed:20620994, PubMed:24726386). Interacts with APOC2; the interaction activates LPL activity in the presence of lipids (By similarity). Interaction with heparan sulfate proteoglycans is required to protect LPL against loss of activity. Associates with lipoprotein particles in blood plasma (By similarity). Interacts with LMF1 and SEL1L; interaction with SEL1L is required to prevent aggregation of newly synthesized LPL in the endoplasmic reticulum (ER), and for normal export of LPL from the ER to the extracellular space (PubMed:25066055). Interacts with SORL1; SORL1 acts as a sorting receptor, promoting LPL localization to endosomes and later to lysosomes, leading to degradation of newly synthesized LPL (By similarity).</text>
</comment>
<comment type="subcellular location">
    <subcellularLocation>
        <location evidence="8 9 12">Cell membrane</location>
        <topology evidence="8 9 12">Peripheral membrane protein</topology>
        <orientation evidence="8 9 12">Extracellular side</orientation>
    </subcellularLocation>
    <subcellularLocation>
        <location evidence="7 10">Secreted</location>
    </subcellularLocation>
    <subcellularLocation>
        <location evidence="12">Secreted</location>
        <location evidence="12">Extracellular space</location>
        <location evidence="12">Extracellular matrix</location>
    </subcellularLocation>
    <text evidence="2 12">Newly synthesized LPL binds to cell surface heparan proteoglycans and is then released by heparanase. Subsequently, it becomes attached to heparan proteoglycan on endothelial cells (PubMed:27811232). Locates to the plasma membrane of microvilli of hepatocytes with triglyceride-rich lipoproteins (TRL). Some of the bound LPL is then internalized and located inside non-coated endocytic vesicles (By similarity).</text>
</comment>
<comment type="tissue specificity">
    <text evidence="7 8 10 11 12">Detected in white and brown adipose tissue and heart muscle, especially at the lumenal surface of capillaries (PubMed:20620994, PubMed:25066055, PubMed:27811232). Detected on capillary endothelium in the lactating mammary gland (PubMed:27811232). Detected in blood plasma (at protein level) (PubMed:17403372, PubMed:25066055). Expressed in liver, epididymal fat, heart, psoas muscle, lactating mammary gland, adrenal, lung, and ovary. Highest levels in heart and adrenal gland.</text>
</comment>
<comment type="developmental stage">
    <text evidence="11">Maximum expression in adipose tissue during early development. In heart, low levels 6 days before birth increasing 278-fold as animals reach adulthood.</text>
</comment>
<comment type="PTM">
    <text evidence="3">Tyrosine nitration after lipopolysaccharide (LPS) challenge down-regulates the lipase activity.</text>
</comment>
<comment type="PTM">
    <text evidence="10">N-glycosylated.</text>
</comment>
<comment type="disruption phenotype">
    <text evidence="13">Mice are born at the expected Mendelian rate. At birth, mutant pups have threefold higher plasma triglyceride levels and sevenfold higher VLDL cholesterol levels relative to wild-type. After suckling they become progressively pale, then cyanotic, and die at about 18 hours after birth. At 18 hours after birth, their plasma triglyceride levels reach 15'090 mg/dl, compared to 188 mg/dl for wild-type. At the same time point, VLDL cholesterol levels reach 280 mg/dl in mutant pups, compared to 6 mg/dl in wild-type. Mutant pups show severely reduced adipose tissue, and their livers are deficient in intracellular lipid droplets. Likewise, the numbers of intracellular lipid droplets in skeletal muscle are severely reduced. Lungs display lipid-filled alveoli and dilated capillaries that are engorged with lipoprotein particles. These particles are marginated and seem to block the access of red blood cells to the vascular endothelium.</text>
</comment>
<comment type="similarity">
    <text evidence="14">Belongs to the AB hydrolase superfamily. Lipase family.</text>
</comment>
<gene>
    <name type="primary">Lpl</name>
</gene>